<dbReference type="EMBL" id="BX548174">
    <property type="protein sequence ID" value="CAE19914.1"/>
    <property type="molecule type" value="Genomic_DNA"/>
</dbReference>
<dbReference type="RefSeq" id="WP_002805169.1">
    <property type="nucleotide sequence ID" value="NC_005072.1"/>
</dbReference>
<dbReference type="SMR" id="Q7V033"/>
<dbReference type="STRING" id="59919.PMM1455"/>
<dbReference type="GeneID" id="60201071"/>
<dbReference type="KEGG" id="pmm:PMM1455"/>
<dbReference type="eggNOG" id="COG0636">
    <property type="taxonomic scope" value="Bacteria"/>
</dbReference>
<dbReference type="HOGENOM" id="CLU_148047_2_0_3"/>
<dbReference type="OrthoDB" id="9810379at2"/>
<dbReference type="Proteomes" id="UP000001026">
    <property type="component" value="Chromosome"/>
</dbReference>
<dbReference type="GO" id="GO:0031676">
    <property type="term" value="C:plasma membrane-derived thylakoid membrane"/>
    <property type="evidence" value="ECO:0007669"/>
    <property type="project" value="UniProtKB-SubCell"/>
</dbReference>
<dbReference type="GO" id="GO:0045259">
    <property type="term" value="C:proton-transporting ATP synthase complex"/>
    <property type="evidence" value="ECO:0007669"/>
    <property type="project" value="UniProtKB-KW"/>
</dbReference>
<dbReference type="GO" id="GO:0033177">
    <property type="term" value="C:proton-transporting two-sector ATPase complex, proton-transporting domain"/>
    <property type="evidence" value="ECO:0007669"/>
    <property type="project" value="InterPro"/>
</dbReference>
<dbReference type="GO" id="GO:0008289">
    <property type="term" value="F:lipid binding"/>
    <property type="evidence" value="ECO:0007669"/>
    <property type="project" value="UniProtKB-KW"/>
</dbReference>
<dbReference type="GO" id="GO:0046933">
    <property type="term" value="F:proton-transporting ATP synthase activity, rotational mechanism"/>
    <property type="evidence" value="ECO:0007669"/>
    <property type="project" value="UniProtKB-UniRule"/>
</dbReference>
<dbReference type="CDD" id="cd18183">
    <property type="entry name" value="ATP-synt_Fo_c_ATPH"/>
    <property type="match status" value="1"/>
</dbReference>
<dbReference type="FunFam" id="1.20.20.10:FF:000001">
    <property type="entry name" value="ATP synthase subunit c, chloroplastic"/>
    <property type="match status" value="1"/>
</dbReference>
<dbReference type="Gene3D" id="1.20.20.10">
    <property type="entry name" value="F1F0 ATP synthase subunit C"/>
    <property type="match status" value="1"/>
</dbReference>
<dbReference type="HAMAP" id="MF_01396">
    <property type="entry name" value="ATP_synth_c_bact"/>
    <property type="match status" value="1"/>
</dbReference>
<dbReference type="InterPro" id="IPR005953">
    <property type="entry name" value="ATP_synth_csu_bac/chlpt"/>
</dbReference>
<dbReference type="InterPro" id="IPR000454">
    <property type="entry name" value="ATP_synth_F0_csu"/>
</dbReference>
<dbReference type="InterPro" id="IPR020537">
    <property type="entry name" value="ATP_synth_F0_csu_DDCD_BS"/>
</dbReference>
<dbReference type="InterPro" id="IPR038662">
    <property type="entry name" value="ATP_synth_F0_csu_sf"/>
</dbReference>
<dbReference type="InterPro" id="IPR002379">
    <property type="entry name" value="ATPase_proteolipid_c-like_dom"/>
</dbReference>
<dbReference type="InterPro" id="IPR035921">
    <property type="entry name" value="F/V-ATP_Csub_sf"/>
</dbReference>
<dbReference type="NCBIfam" id="TIGR01260">
    <property type="entry name" value="ATP_synt_c"/>
    <property type="match status" value="1"/>
</dbReference>
<dbReference type="NCBIfam" id="NF005608">
    <property type="entry name" value="PRK07354.1"/>
    <property type="match status" value="1"/>
</dbReference>
<dbReference type="PANTHER" id="PTHR10031">
    <property type="entry name" value="ATP SYNTHASE LIPID-BINDING PROTEIN, MITOCHONDRIAL"/>
    <property type="match status" value="1"/>
</dbReference>
<dbReference type="PANTHER" id="PTHR10031:SF0">
    <property type="entry name" value="ATPASE PROTEIN 9"/>
    <property type="match status" value="1"/>
</dbReference>
<dbReference type="Pfam" id="PF00137">
    <property type="entry name" value="ATP-synt_C"/>
    <property type="match status" value="1"/>
</dbReference>
<dbReference type="PRINTS" id="PR00124">
    <property type="entry name" value="ATPASEC"/>
</dbReference>
<dbReference type="SUPFAM" id="SSF81333">
    <property type="entry name" value="F1F0 ATP synthase subunit C"/>
    <property type="match status" value="1"/>
</dbReference>
<dbReference type="PROSITE" id="PS00605">
    <property type="entry name" value="ATPASE_C"/>
    <property type="match status" value="1"/>
</dbReference>
<proteinExistence type="inferred from homology"/>
<comment type="function">
    <text evidence="1">F(1)F(0) ATP synthase produces ATP from ADP in the presence of a proton or sodium gradient. F-type ATPases consist of two structural domains, F(1) containing the extramembraneous catalytic core and F(0) containing the membrane proton channel, linked together by a central stalk and a peripheral stalk. During catalysis, ATP synthesis in the catalytic domain of F(1) is coupled via a rotary mechanism of the central stalk subunits to proton translocation.</text>
</comment>
<comment type="function">
    <text evidence="1">Key component of the F(0) channel; it plays a direct role in translocation across the membrane. A homomeric c-ring of between 10-14 subunits forms the central stalk rotor element with the F(1) delta and epsilon subunits.</text>
</comment>
<comment type="subunit">
    <text evidence="1">F-type ATPases have 2 components, F(1) - the catalytic core - and F(0) - the membrane proton channel. F(1) has five subunits: alpha(3), beta(3), gamma(1), delta(1), epsilon(1). F(0) has four main subunits: a(1), b(1), b'(1) and c(10-14). The alpha and beta chains form an alternating ring which encloses part of the gamma chain. F(1) is attached to F(0) by a central stalk formed by the gamma and epsilon chains, while a peripheral stalk is formed by the delta, b and b' chains.</text>
</comment>
<comment type="subcellular location">
    <subcellularLocation>
        <location evidence="1">Cellular thylakoid membrane</location>
        <topology evidence="1">Multi-pass membrane protein</topology>
    </subcellularLocation>
</comment>
<comment type="similarity">
    <text evidence="1">Belongs to the ATPase C chain family.</text>
</comment>
<protein>
    <recommendedName>
        <fullName evidence="1">ATP synthase subunit c</fullName>
    </recommendedName>
    <alternativeName>
        <fullName evidence="1">ATP synthase F(0) sector subunit c</fullName>
    </alternativeName>
    <alternativeName>
        <fullName evidence="1">F-type ATPase subunit c</fullName>
        <shortName evidence="1">F-ATPase subunit c</shortName>
    </alternativeName>
    <alternativeName>
        <fullName evidence="1">Lipid-binding protein</fullName>
    </alternativeName>
</protein>
<sequence>MDSITSAASVVAAGLAVGLGAIGPGLGQGNAAQGAVEGIARQPEAEGKIRGTLLLSFAFMESLTIYGLVVALVLLFANPFS</sequence>
<reference key="1">
    <citation type="journal article" date="2003" name="Nature">
        <title>Genome divergence in two Prochlorococcus ecotypes reflects oceanic niche differentiation.</title>
        <authorList>
            <person name="Rocap G."/>
            <person name="Larimer F.W."/>
            <person name="Lamerdin J.E."/>
            <person name="Malfatti S."/>
            <person name="Chain P."/>
            <person name="Ahlgren N.A."/>
            <person name="Arellano A."/>
            <person name="Coleman M."/>
            <person name="Hauser L."/>
            <person name="Hess W.R."/>
            <person name="Johnson Z.I."/>
            <person name="Land M.L."/>
            <person name="Lindell D."/>
            <person name="Post A.F."/>
            <person name="Regala W."/>
            <person name="Shah M."/>
            <person name="Shaw S.L."/>
            <person name="Steglich C."/>
            <person name="Sullivan M.B."/>
            <person name="Ting C.S."/>
            <person name="Tolonen A."/>
            <person name="Webb E.A."/>
            <person name="Zinser E.R."/>
            <person name="Chisholm S.W."/>
        </authorList>
    </citation>
    <scope>NUCLEOTIDE SEQUENCE [LARGE SCALE GENOMIC DNA]</scope>
    <source>
        <strain>CCMP1986 / NIES-2087 / MED4</strain>
    </source>
</reference>
<keyword id="KW-0066">ATP synthesis</keyword>
<keyword id="KW-0138">CF(0)</keyword>
<keyword id="KW-0375">Hydrogen ion transport</keyword>
<keyword id="KW-0406">Ion transport</keyword>
<keyword id="KW-0446">Lipid-binding</keyword>
<keyword id="KW-0472">Membrane</keyword>
<keyword id="KW-0793">Thylakoid</keyword>
<keyword id="KW-0812">Transmembrane</keyword>
<keyword id="KW-1133">Transmembrane helix</keyword>
<keyword id="KW-0813">Transport</keyword>
<gene>
    <name evidence="1" type="primary">atpE</name>
    <name evidence="1" type="synonym">atpH</name>
    <name type="ordered locus">PMM1455</name>
</gene>
<accession>Q7V033</accession>
<feature type="chain" id="PRO_5000096589" description="ATP synthase subunit c">
    <location>
        <begin position="1"/>
        <end position="81"/>
    </location>
</feature>
<feature type="transmembrane region" description="Helical" evidence="1">
    <location>
        <begin position="7"/>
        <end position="27"/>
    </location>
</feature>
<feature type="transmembrane region" description="Helical" evidence="1">
    <location>
        <begin position="57"/>
        <end position="77"/>
    </location>
</feature>
<feature type="site" description="Reversibly protonated during proton transport" evidence="1">
    <location>
        <position position="61"/>
    </location>
</feature>
<evidence type="ECO:0000255" key="1">
    <source>
        <dbReference type="HAMAP-Rule" id="MF_01396"/>
    </source>
</evidence>
<name>ATPL_PROMP</name>
<organism>
    <name type="scientific">Prochlorococcus marinus subsp. pastoris (strain CCMP1986 / NIES-2087 / MED4)</name>
    <dbReference type="NCBI Taxonomy" id="59919"/>
    <lineage>
        <taxon>Bacteria</taxon>
        <taxon>Bacillati</taxon>
        <taxon>Cyanobacteriota</taxon>
        <taxon>Cyanophyceae</taxon>
        <taxon>Synechococcales</taxon>
        <taxon>Prochlorococcaceae</taxon>
        <taxon>Prochlorococcus</taxon>
    </lineage>
</organism>